<feature type="chain" id="PRO_0000097783" description="Cyclic pyranopterin monophosphate synthase">
    <location>
        <begin position="1"/>
        <end position="254"/>
    </location>
</feature>
<feature type="region of interest" description="Molybdenum cofactor biosynthesis protein C">
    <location>
        <begin position="1"/>
        <end position="143"/>
    </location>
</feature>
<feature type="region of interest" description="Unknown">
    <location>
        <begin position="144"/>
        <end position="254"/>
    </location>
</feature>
<feature type="active site" evidence="1">
    <location>
        <position position="114"/>
    </location>
</feature>
<feature type="binding site" evidence="1">
    <location>
        <begin position="63"/>
        <end position="65"/>
    </location>
    <ligand>
        <name>substrate</name>
    </ligand>
</feature>
<feature type="binding site" evidence="1">
    <location>
        <begin position="99"/>
        <end position="100"/>
    </location>
    <ligand>
        <name>substrate</name>
    </ligand>
</feature>
<name>MOAC_AQUAE</name>
<evidence type="ECO:0000250" key="1">
    <source>
        <dbReference type="UniProtKB" id="P0A738"/>
    </source>
</evidence>
<evidence type="ECO:0000305" key="2"/>
<keyword id="KW-0456">Lyase</keyword>
<keyword id="KW-0501">Molybdenum cofactor biosynthesis</keyword>
<keyword id="KW-1185">Reference proteome</keyword>
<accession>O66810</accession>
<organism>
    <name type="scientific">Aquifex aeolicus (strain VF5)</name>
    <dbReference type="NCBI Taxonomy" id="224324"/>
    <lineage>
        <taxon>Bacteria</taxon>
        <taxon>Pseudomonadati</taxon>
        <taxon>Aquificota</taxon>
        <taxon>Aquificia</taxon>
        <taxon>Aquificales</taxon>
        <taxon>Aquificaceae</taxon>
        <taxon>Aquifex</taxon>
    </lineage>
</organism>
<proteinExistence type="inferred from homology"/>
<comment type="function">
    <text evidence="1">Catalyzes the conversion of (8S)-3',8-cyclo-7,8-dihydroguanosine 5'-triphosphate to cyclic pyranopterin monophosphate (cPMP).</text>
</comment>
<comment type="catalytic activity">
    <reaction evidence="1">
        <text>(8S)-3',8-cyclo-7,8-dihydroguanosine 5'-triphosphate = cyclic pyranopterin phosphate + diphosphate</text>
        <dbReference type="Rhea" id="RHEA:49580"/>
        <dbReference type="ChEBI" id="CHEBI:33019"/>
        <dbReference type="ChEBI" id="CHEBI:59648"/>
        <dbReference type="ChEBI" id="CHEBI:131766"/>
        <dbReference type="EC" id="4.6.1.17"/>
    </reaction>
</comment>
<comment type="pathway">
    <text evidence="1">Cofactor biosynthesis; molybdopterin biosynthesis.</text>
</comment>
<comment type="subunit">
    <text evidence="1">Homohexamer; trimer of dimers.</text>
</comment>
<comment type="similarity">
    <text evidence="2">In the N-terminal section; belongs to the MoaC family.</text>
</comment>
<reference key="1">
    <citation type="journal article" date="1998" name="Nature">
        <title>The complete genome of the hyperthermophilic bacterium Aquifex aeolicus.</title>
        <authorList>
            <person name="Deckert G."/>
            <person name="Warren P.V."/>
            <person name="Gaasterland T."/>
            <person name="Young W.G."/>
            <person name="Lenox A.L."/>
            <person name="Graham D.E."/>
            <person name="Overbeek R."/>
            <person name="Snead M.A."/>
            <person name="Keller M."/>
            <person name="Aujay M."/>
            <person name="Huber R."/>
            <person name="Feldman R.A."/>
            <person name="Short J.M."/>
            <person name="Olsen G.J."/>
            <person name="Swanson R.V."/>
        </authorList>
    </citation>
    <scope>NUCLEOTIDE SEQUENCE [LARGE SCALE GENOMIC DNA]</scope>
    <source>
        <strain>VF5</strain>
    </source>
</reference>
<gene>
    <name type="primary">moaC</name>
    <name type="ordered locus">aq_527</name>
</gene>
<dbReference type="EC" id="4.6.1.17" evidence="1"/>
<dbReference type="EMBL" id="AE000657">
    <property type="protein sequence ID" value="AAC06772.1"/>
    <property type="molecule type" value="Genomic_DNA"/>
</dbReference>
<dbReference type="PIR" id="F70347">
    <property type="entry name" value="F70347"/>
</dbReference>
<dbReference type="RefSeq" id="NP_213370.1">
    <property type="nucleotide sequence ID" value="NC_000918.1"/>
</dbReference>
<dbReference type="RefSeq" id="WP_010880308.1">
    <property type="nucleotide sequence ID" value="NC_000918.1"/>
</dbReference>
<dbReference type="SMR" id="O66810"/>
<dbReference type="FunCoup" id="O66810">
    <property type="interactions" value="284"/>
</dbReference>
<dbReference type="STRING" id="224324.aq_527"/>
<dbReference type="EnsemblBacteria" id="AAC06772">
    <property type="protein sequence ID" value="AAC06772"/>
    <property type="gene ID" value="aq_527"/>
</dbReference>
<dbReference type="KEGG" id="aae:aq_527"/>
<dbReference type="eggNOG" id="COG0315">
    <property type="taxonomic scope" value="Bacteria"/>
</dbReference>
<dbReference type="HOGENOM" id="CLU_063423_1_1_0"/>
<dbReference type="InParanoid" id="O66810"/>
<dbReference type="OrthoDB" id="9794429at2"/>
<dbReference type="UniPathway" id="UPA00344"/>
<dbReference type="Proteomes" id="UP000000798">
    <property type="component" value="Chromosome"/>
</dbReference>
<dbReference type="GO" id="GO:0061799">
    <property type="term" value="F:cyclic pyranopterin monophosphate synthase activity"/>
    <property type="evidence" value="ECO:0007669"/>
    <property type="project" value="UniProtKB-EC"/>
</dbReference>
<dbReference type="GO" id="GO:0006777">
    <property type="term" value="P:Mo-molybdopterin cofactor biosynthetic process"/>
    <property type="evidence" value="ECO:0007669"/>
    <property type="project" value="UniProtKB-KW"/>
</dbReference>
<dbReference type="CDD" id="cd01420">
    <property type="entry name" value="MoaC_PE"/>
    <property type="match status" value="1"/>
</dbReference>
<dbReference type="Gene3D" id="3.30.70.640">
    <property type="entry name" value="Molybdopterin cofactor biosynthesis C (MoaC) domain"/>
    <property type="match status" value="1"/>
</dbReference>
<dbReference type="InterPro" id="IPR023045">
    <property type="entry name" value="MoaC"/>
</dbReference>
<dbReference type="InterPro" id="IPR047594">
    <property type="entry name" value="MoaC_bact/euk"/>
</dbReference>
<dbReference type="InterPro" id="IPR036522">
    <property type="entry name" value="MoaC_sf"/>
</dbReference>
<dbReference type="InterPro" id="IPR002820">
    <property type="entry name" value="Mopterin_CF_biosynth-C_dom"/>
</dbReference>
<dbReference type="NCBIfam" id="TIGR00581">
    <property type="entry name" value="moaC"/>
    <property type="match status" value="1"/>
</dbReference>
<dbReference type="NCBIfam" id="NF006870">
    <property type="entry name" value="PRK09364.1"/>
    <property type="match status" value="1"/>
</dbReference>
<dbReference type="Pfam" id="PF01967">
    <property type="entry name" value="MoaC"/>
    <property type="match status" value="1"/>
</dbReference>
<dbReference type="SUPFAM" id="SSF55040">
    <property type="entry name" value="Molybdenum cofactor biosynthesis protein C, MoaC"/>
    <property type="match status" value="1"/>
</dbReference>
<sequence>MRTVDITTKIETLREAKAYGRIRLKPETVKLIKENKVPKGNLVEATKLSGIFGAKKTGELLPFCHPIPLDFVALEVKVNEDNLEVFSTVRGIARTGYEMEALTAVTTALLNVYDMCKALDDSMVIEEVKLLEKSGGKSDWFRRLDGVKVNLHAENEGLRKIAEDYLKELGATFAEEAELYISIGDNLPINKEIRSLERVISLYDFRRNPKEVGKEIRVGWSDDALIIILPESEEKIRFFFETFGGIIGNLLCRR</sequence>
<protein>
    <recommendedName>
        <fullName evidence="1">Cyclic pyranopterin monophosphate synthase</fullName>
        <ecNumber evidence="1">4.6.1.17</ecNumber>
    </recommendedName>
    <alternativeName>
        <fullName evidence="1">Molybdenum cofactor biosynthesis protein C</fullName>
    </alternativeName>
</protein>